<accession>B3LNV9</accession>
<sequence>MVNFYDDVDESKSHGEFPLIPVVLQNSSELSVRTIPTGNEIIESVHLTKWLRKYRNALASQLDRYEKGWQSKIANFRLQVQHVINYSRKNIFNVDSENKHTVVPGSLIALGAFFSGSIAVNRSNWGAKRLIFGHKSSILEKLCTSLPSRILLPWVLAAATFKYWAPQTSQNLVNATENDLLPADFVKSYHNTWKRIYEEGYVAKKCDLKRQIDQTLQKNIRYAREQLYEKLEQA</sequence>
<gene>
    <name type="primary">MIC27</name>
    <name type="ORF">SCRG_03236</name>
</gene>
<comment type="function">
    <text evidence="1">Component of the MICOS complex, a large protein complex of the mitochondrial inner membrane that plays crucial roles in the maintenance of crista junctions, inner membrane architecture, and formation of contact sites to the outer membrane.</text>
</comment>
<comment type="subunit">
    <text evidence="1">Component of the mitochondrial contact site and cristae organizing system (MICOS) complex.</text>
</comment>
<comment type="subcellular location">
    <subcellularLocation>
        <location evidence="1">Mitochondrion inner membrane</location>
        <topology evidence="3">Multi-pass membrane protein</topology>
    </subcellularLocation>
</comment>
<comment type="similarity">
    <text evidence="3">Belongs to the apolipoprotein O/MICOS complex subunit Mic27 family.</text>
</comment>
<protein>
    <recommendedName>
        <fullName>MICOS complex subunit MIC27</fullName>
    </recommendedName>
</protein>
<evidence type="ECO:0000250" key="1"/>
<evidence type="ECO:0000255" key="2"/>
<evidence type="ECO:0000305" key="3"/>
<reference key="1">
    <citation type="submission" date="2005-03" db="EMBL/GenBank/DDBJ databases">
        <title>Annotation of the Saccharomyces cerevisiae RM11-1a genome.</title>
        <authorList>
            <consortium name="The Broad Institute Genome Sequencing Platform"/>
            <person name="Birren B.W."/>
            <person name="Lander E.S."/>
            <person name="Galagan J.E."/>
            <person name="Nusbaum C."/>
            <person name="Devon K."/>
            <person name="Cuomo C."/>
            <person name="Jaffe D.B."/>
            <person name="Butler J."/>
            <person name="Alvarez P."/>
            <person name="Gnerre S."/>
            <person name="Grabherr M."/>
            <person name="Kleber M."/>
            <person name="Mauceli E.W."/>
            <person name="Brockman W."/>
            <person name="MacCallum I.A."/>
            <person name="Rounsley S."/>
            <person name="Young S.K."/>
            <person name="LaButti K."/>
            <person name="Pushparaj V."/>
            <person name="DeCaprio D."/>
            <person name="Crawford M."/>
            <person name="Koehrsen M."/>
            <person name="Engels R."/>
            <person name="Montgomery P."/>
            <person name="Pearson M."/>
            <person name="Howarth C."/>
            <person name="Larson L."/>
            <person name="Luoma S."/>
            <person name="White J."/>
            <person name="O'Leary S."/>
            <person name="Kodira C.D."/>
            <person name="Zeng Q."/>
            <person name="Yandava C."/>
            <person name="Alvarado L."/>
            <person name="Pratt S."/>
            <person name="Kruglyak L."/>
        </authorList>
    </citation>
    <scope>NUCLEOTIDE SEQUENCE [LARGE SCALE GENOMIC DNA]</scope>
    <source>
        <strain>RM11-1a</strain>
    </source>
</reference>
<feature type="chain" id="PRO_0000399837" description="MICOS complex subunit MIC27">
    <location>
        <begin position="1"/>
        <end position="234"/>
    </location>
</feature>
<feature type="topological domain" description="Mitochondrial intermembrane" evidence="2">
    <location>
        <begin position="1"/>
        <end position="100"/>
    </location>
</feature>
<feature type="transmembrane region" description="Helical" evidence="2">
    <location>
        <begin position="101"/>
        <end position="120"/>
    </location>
</feature>
<feature type="topological domain" description="Mitochondrial matrix" evidence="2">
    <location>
        <begin position="121"/>
        <end position="141"/>
    </location>
</feature>
<feature type="transmembrane region" description="Helical" evidence="2">
    <location>
        <begin position="142"/>
        <end position="161"/>
    </location>
</feature>
<feature type="topological domain" description="Mitochondrial intermembrane" evidence="2">
    <location>
        <begin position="162"/>
        <end position="234"/>
    </location>
</feature>
<keyword id="KW-0472">Membrane</keyword>
<keyword id="KW-0496">Mitochondrion</keyword>
<keyword id="KW-0999">Mitochondrion inner membrane</keyword>
<keyword id="KW-0812">Transmembrane</keyword>
<keyword id="KW-1133">Transmembrane helix</keyword>
<dbReference type="EMBL" id="CH408049">
    <property type="protein sequence ID" value="EDV12354.1"/>
    <property type="molecule type" value="Genomic_DNA"/>
</dbReference>
<dbReference type="SMR" id="B3LNV9"/>
<dbReference type="HOGENOM" id="CLU_093584_0_0_1"/>
<dbReference type="OrthoDB" id="10981at4893"/>
<dbReference type="Proteomes" id="UP000008335">
    <property type="component" value="Unassembled WGS sequence"/>
</dbReference>
<dbReference type="GO" id="GO:0005743">
    <property type="term" value="C:mitochondrial inner membrane"/>
    <property type="evidence" value="ECO:0007669"/>
    <property type="project" value="UniProtKB-SubCell"/>
</dbReference>
<proteinExistence type="inferred from homology"/>
<name>MIC27_YEAS1</name>
<organism>
    <name type="scientific">Saccharomyces cerevisiae (strain RM11-1a)</name>
    <name type="common">Baker's yeast</name>
    <dbReference type="NCBI Taxonomy" id="285006"/>
    <lineage>
        <taxon>Eukaryota</taxon>
        <taxon>Fungi</taxon>
        <taxon>Dikarya</taxon>
        <taxon>Ascomycota</taxon>
        <taxon>Saccharomycotina</taxon>
        <taxon>Saccharomycetes</taxon>
        <taxon>Saccharomycetales</taxon>
        <taxon>Saccharomycetaceae</taxon>
        <taxon>Saccharomyces</taxon>
    </lineage>
</organism>